<organismHost>
    <name type="scientific">Vitis vinifera</name>
    <name type="common">Grape</name>
    <dbReference type="NCBI Taxonomy" id="29760"/>
</organismHost>
<accession>Q6W8W5</accession>
<keyword id="KW-0067">ATP-binding</keyword>
<keyword id="KW-0191">Covalent protein-RNA linkage</keyword>
<keyword id="KW-0347">Helicase</keyword>
<keyword id="KW-1038">Host endoplasmic reticulum</keyword>
<keyword id="KW-1043">Host membrane</keyword>
<keyword id="KW-0378">Hydrolase</keyword>
<keyword id="KW-0472">Membrane</keyword>
<keyword id="KW-0547">Nucleotide-binding</keyword>
<keyword id="KW-0548">Nucleotidyltransferase</keyword>
<keyword id="KW-0597">Phosphoprotein</keyword>
<keyword id="KW-0645">Protease</keyword>
<keyword id="KW-0694">RNA-binding</keyword>
<keyword id="KW-0696">RNA-directed RNA polymerase</keyword>
<keyword id="KW-0788">Thiol protease</keyword>
<keyword id="KW-0808">Transferase</keyword>
<keyword id="KW-0812">Transmembrane</keyword>
<keyword id="KW-1133">Transmembrane helix</keyword>
<keyword id="KW-0693">Viral RNA replication</keyword>
<comment type="function">
    <text evidence="1">Picornain 3C-like protease is a thiol protease that cleaves the P1 and P2 polyproteins.</text>
</comment>
<comment type="catalytic activity">
    <reaction evidence="3">
        <text>RNA(n) + a ribonucleoside 5'-triphosphate = RNA(n+1) + diphosphate</text>
        <dbReference type="Rhea" id="RHEA:21248"/>
        <dbReference type="Rhea" id="RHEA-COMP:14527"/>
        <dbReference type="Rhea" id="RHEA-COMP:17342"/>
        <dbReference type="ChEBI" id="CHEBI:33019"/>
        <dbReference type="ChEBI" id="CHEBI:61557"/>
        <dbReference type="ChEBI" id="CHEBI:140395"/>
        <dbReference type="EC" id="2.7.7.48"/>
    </reaction>
</comment>
<comment type="subcellular location">
    <molecule>Viral genome-linked protein</molecule>
    <subcellularLocation>
        <location evidence="1">Host endoplasmic reticulum lumen</location>
    </subcellularLocation>
</comment>
<comment type="subcellular location">
    <molecule>Putative ATP-dependent helicase</molecule>
    <subcellularLocation>
        <location evidence="1">Host endoplasmic reticulum membrane</location>
        <topology evidence="1">Single-pass membrane protein</topology>
    </subcellularLocation>
</comment>
<comment type="PTM">
    <text evidence="1">Specific enzymatic cleavages by picornain 3C-like protease in vivo yield mature proteins. Picornain 3C-like protease is autocatalytically processed (By similarity).</text>
</comment>
<comment type="PTM">
    <text evidence="1">VPg is uridylylated by the polymerase and is covalently linked to the 5'-end of genomic RNA. This uridylylated form acts as a nucleotide-peptide primer for the polymerase (By similarity).</text>
</comment>
<comment type="similarity">
    <text evidence="6">Belongs to the nepoviruses RNA1 polyprotein family.</text>
</comment>
<organism>
    <name type="scientific">Arabis mosaic virus (isolate NW)</name>
    <name type="common">ArMV</name>
    <dbReference type="NCBI Taxonomy" id="282063"/>
    <lineage>
        <taxon>Viruses</taxon>
        <taxon>Riboviria</taxon>
        <taxon>Orthornavirae</taxon>
        <taxon>Pisuviricota</taxon>
        <taxon>Pisoniviricetes</taxon>
        <taxon>Picornavirales</taxon>
        <taxon>Secoviridae</taxon>
        <taxon>Comovirinae</taxon>
        <taxon>Nepovirus</taxon>
        <taxon>Nepovirus arabis</taxon>
    </lineage>
</organism>
<evidence type="ECO:0000250" key="1"/>
<evidence type="ECO:0000255" key="2"/>
<evidence type="ECO:0000255" key="3">
    <source>
        <dbReference type="PROSITE-ProRule" id="PRU00539"/>
    </source>
</evidence>
<evidence type="ECO:0000255" key="4">
    <source>
        <dbReference type="PROSITE-ProRule" id="PRU00551"/>
    </source>
</evidence>
<evidence type="ECO:0000255" key="5">
    <source>
        <dbReference type="PROSITE-ProRule" id="PRU01222"/>
    </source>
</evidence>
<evidence type="ECO:0000305" key="6"/>
<reference key="1">
    <citation type="journal article" date="2004" name="Arch. Virol.">
        <title>Complete nucleotide sequence of the RNA 1 of a grapevine isolate of Arabis mosaic virus.</title>
        <authorList>
            <person name="Wetzel T."/>
            <person name="Beck A."/>
            <person name="Wegener U."/>
            <person name="Krczal G."/>
        </authorList>
    </citation>
    <scope>NUCLEOTIDE SEQUENCE [GENOMIC RNA]</scope>
</reference>
<feature type="chain" id="PRO_0000037040" description="P1A protein" evidence="2">
    <location>
        <begin position="1"/>
        <end position="566"/>
    </location>
</feature>
<feature type="chain" id="PRO_0000037041" description="Putative ATP-dependent helicase" evidence="2">
    <location>
        <begin position="567"/>
        <end position="1216"/>
    </location>
</feature>
<feature type="chain" id="PRO_0000037042" description="Viral genome-linked protein" evidence="1">
    <location>
        <begin position="1217"/>
        <end position="1240"/>
    </location>
</feature>
<feature type="chain" id="PRO_0000037043" description="Picornain 3C-like protease" evidence="2">
    <location>
        <begin position="1241"/>
        <end position="1460"/>
    </location>
</feature>
<feature type="chain" id="PRO_0000037044" description="RNA-directed RNA polymerase" evidence="2">
    <location>
        <begin position="1461"/>
        <end position="2284"/>
    </location>
</feature>
<feature type="topological domain" description="Cytoplasmic" evidence="2">
    <location>
        <begin position="567"/>
        <end position="1172"/>
    </location>
</feature>
<feature type="transmembrane region" description="Helical" evidence="2">
    <location>
        <begin position="1173"/>
        <end position="1193"/>
    </location>
</feature>
<feature type="topological domain" description="Lumenal" evidence="2">
    <location>
        <begin position="1194"/>
        <end position="1216"/>
    </location>
</feature>
<feature type="domain" description="SF3 helicase" evidence="4">
    <location>
        <begin position="750"/>
        <end position="918"/>
    </location>
</feature>
<feature type="domain" description="Peptidase C3" evidence="5">
    <location>
        <begin position="1242"/>
        <end position="1457"/>
    </location>
</feature>
<feature type="domain" description="RdRp catalytic" evidence="3">
    <location>
        <begin position="1727"/>
        <end position="1851"/>
    </location>
</feature>
<feature type="active site" description="For picornain 3C-like protease activity" evidence="5">
    <location>
        <position position="1283"/>
    </location>
</feature>
<feature type="active site" description="For picornain 3C-like protease activity" evidence="5">
    <location>
        <position position="1327"/>
    </location>
</feature>
<feature type="active site" description="For picornain 3C-like protease activity" evidence="5">
    <location>
        <position position="1419"/>
    </location>
</feature>
<feature type="binding site" evidence="4">
    <location>
        <begin position="780"/>
        <end position="787"/>
    </location>
    <ligand>
        <name>ATP</name>
        <dbReference type="ChEBI" id="CHEBI:30616"/>
    </ligand>
</feature>
<feature type="modified residue" description="O-(5'-phospho-RNA)-serine" evidence="1">
    <location>
        <position position="1217"/>
    </location>
</feature>
<sequence>MWQISEGSQCCCTGKTWSNAEAKEARYVCNCILSCRLVKVEVVPQLPKSRIAPAQDKAERITPLCNSNGGAAPTIPKSKRAFEPRTPLIKQRCDVVVRVGPPADLDLVYPALVQEEVAIPPTEKVLQPTLKAEVRVPIFCAPKRMVAFPKPPTKIASKRDALQFPAGAVAFNGINFIDAKGKVVLSEGAKRILKGIRVAKQQRQRTARRSAACKKVRKARDLALFKRLSEECTFQDLPGGFAGEIPAGHACYRKVAAPTTSFKKEVSKGKKAKKPSTPVLPAQDFSCVDSFDWGEKSSPVEIEDDWVLIEKPVLQRQAAHSAQGRATEALTRFAASGGFTVKAHQKVEELASSGEAGHLIAGEFAELCLRSLVYNDAPVLSASIEELITEQDFKDAIELFNIELAELPTDSTTCGQFNDWASAAKKMAKGVGSIVGDFARMSGAGVLITFDRCIEYLQKKALTFCQKVFNATMAPYLSHLAEASNIISKIWKKLAEWMESLKGKAGLALEVLAQHAIFALGAIVVGGVVVLVEKVLVACKVIPNCGIVLGAFLTLFFASLGLTALECTAEEIFRMHQCCKGAIYSMYSVKEPMNEAEGSSVTMGVLQGLDNAISALTRVGQSMISFKLGSFSYYAKIAQGFDQLARGKKAIGELTGWLIDLVGGVYSKVSGQESTFFDELSTIVCLDVRSWLLKSKRVRLQVETMAIGDRITLDTISKPTGMQGHKILITAAGVPRKTSADFTMCIKEEVSKLEEVHQRTACAGINEGMRQFPFWVYIFGASQSGKTTIANSVIIPSLLEEMNLPKTSVYSRPKTGGFWSGYARQACVKVDDFYAIEQTPSLASSMIDVVNSEPYPLDMAYLHEKGMSMDSPLVVTTANTVKPPTNAGITDEASFFNRRAAVIEVRRKDNTHFTPRAYDNCIEVRFLHNKCAYVDSEGIPQGPAVNTPMEEGWISPSEAVATLKNLLGEHVLAEEEKLLDYRERIGNDHPIYNAAQEFIGNMHYPGQWLTTEQKNTYGINEEGFSFLAVDGKMYKYNVLGKLNPCETVPPHPNVIPWLEEKTLSIVHWDAHKHIATGPRNALVSCFLQGLVQDQSRVQSVDLMGKDSSPEQQAFFKRLTLSERIYLRLCQIRIDAVKKEQLSSVSRGALDVLRDCMYKSKAKLVENYSLLLTLVAILVLIATAYSLISTLIGLAGCSSFAGGMVALNHVSNASIPCSEPRLEEGYIPRNKFVSRISRTRGDGPAQGQGDHEELVTELYYYFDGVKRLISCCWFKGRSLLLTRHQAMAIPIGNEIQVIYADGTERKLVWPGRQEDRSCKGYIEFPDNELVVFEHARLLTMPIKYEKFFVDDPDHQISPNVAVKCCVARLEDGIPQFHFWNKYASARSDVHTIKDEGGSAVYQNKIRRYIIYAHEAKRNDCGAIAVAEIQRTPKVLAMLVSGIGNVTYSSVIPSYSSSFVRGDVPYVPEDGIKTNGYRKVGYLMAKDAPHVPSKTAFMKVPDEICFPYPNPKQPAILSAEDERLIGTVHEGYTPIREGMKKFAEPMHLLDAQLLDEVAGDMVHTWFDAGEILEDVPLSIAINGDVEEEYFDPIAMDTSEGYPEVLQRKNGEKGKARFFVGEPGAREFVPGCGPERAYLSLEEECKTRIPSLVSIETPKDERLKRSKIETPGTRLFSVLPLAYNLLLRVKFLSFSRLLMKKRSHLPCQVGINPYSREWTDLYHRLAEKSDVGYNCDYKGFDGLITEQILAVVATMINAGFRNPVSNQQRSNLLMAISGRLSICGSQVYETEAGIPSGCALTVVINSIFNELLMRYCYKKIVPPIYRECFDRCVVLITYGDDNVFTVSQSIMTSFTGDALKAEMANLGVTITDGKDKSLATIPARPLLELEFLKRGFKKGNGGLIYAPLEKLSIMSSLVYIRSDGSDMLQKLVDNVNTALVELYLHQDREYSESVRDFYLEKLPPGSYKELTTWYEAQIFHECQLSGESGWKPQGLIEVSHGASFASFVQQNGTELERHDICPGLAISGSKYIAREEEILMSLSSLLPGDINAVKLTLKCGDGIGRLPSKASVLSQRKPGIVMQLCARAIKEKKTLVIRDERPYIGGWAMACICGESFGFSIKDTLALYANLMGPNRKNGLATYFTDFDSPVHVKKIHAITNGEEGVAMLKDSFAFCEPTTIAATSCDTRKEMVSHLPTSFPNIVLIGGISYPKEGGEPGALYSPTDVVMSKKLQGVYVSEAVLKCCLRCPGAAVKTVLQTSSPGSSLSQAHFRSLRRVQSHRCMRKS</sequence>
<name>POL1_ARMVN</name>
<protein>
    <recommendedName>
        <fullName>RNA1 polyprotein</fullName>
    </recommendedName>
    <alternativeName>
        <fullName>P1</fullName>
    </alternativeName>
    <component>
        <recommendedName>
            <fullName>P1A protein</fullName>
            <shortName>1A</shortName>
        </recommendedName>
        <alternativeName>
            <fullName>Protease cofactor</fullName>
        </alternativeName>
    </component>
    <component>
        <recommendedName>
            <fullName>Putative ATP-dependent helicase</fullName>
            <ecNumber>3.6.4.-</ecNumber>
        </recommendedName>
        <alternativeName>
            <fullName>1B</fullName>
        </alternativeName>
        <alternativeName>
            <fullName>Membrane-binding protein</fullName>
        </alternativeName>
        <alternativeName>
            <fullName>NTP-binding protein</fullName>
            <shortName>NTB</shortName>
        </alternativeName>
    </component>
    <component>
        <recommendedName>
            <fullName>Viral genome-linked protein</fullName>
        </recommendedName>
        <alternativeName>
            <fullName>1C-VPg</fullName>
        </alternativeName>
    </component>
    <component>
        <recommendedName>
            <fullName>Picornain 3C-like protease</fullName>
            <shortName>3C-like protease</shortName>
            <ecNumber>3.4.22.-</ecNumber>
        </recommendedName>
        <alternativeName>
            <fullName>1D-PRO</fullName>
        </alternativeName>
    </component>
    <component>
        <recommendedName>
            <fullName>RNA-directed RNA polymerase</fullName>
            <ecNumber>2.7.7.48</ecNumber>
        </recommendedName>
        <alternativeName>
            <fullName>1E-POL</fullName>
        </alternativeName>
    </component>
</protein>
<proteinExistence type="inferred from homology"/>
<dbReference type="EC" id="3.6.4.-"/>
<dbReference type="EC" id="3.4.22.-"/>
<dbReference type="EC" id="2.7.7.48"/>
<dbReference type="EMBL" id="AY303786">
    <property type="protein sequence ID" value="AAQ73821.1"/>
    <property type="molecule type" value="Genomic_RNA"/>
</dbReference>
<dbReference type="RefSeq" id="YP_053925.1">
    <property type="nucleotide sequence ID" value="NC_006057.1"/>
</dbReference>
<dbReference type="SMR" id="Q6W8W5"/>
<dbReference type="MEROPS" id="C03.004"/>
<dbReference type="GeneID" id="2943104"/>
<dbReference type="KEGG" id="vg:2943104"/>
<dbReference type="Proteomes" id="UP000007441">
    <property type="component" value="Genome"/>
</dbReference>
<dbReference type="GO" id="GO:0044166">
    <property type="term" value="C:host cell endoplasmic reticulum lumen"/>
    <property type="evidence" value="ECO:0007669"/>
    <property type="project" value="UniProtKB-SubCell"/>
</dbReference>
<dbReference type="GO" id="GO:0044167">
    <property type="term" value="C:host cell endoplasmic reticulum membrane"/>
    <property type="evidence" value="ECO:0007669"/>
    <property type="project" value="UniProtKB-SubCell"/>
</dbReference>
<dbReference type="GO" id="GO:0016020">
    <property type="term" value="C:membrane"/>
    <property type="evidence" value="ECO:0007669"/>
    <property type="project" value="UniProtKB-KW"/>
</dbReference>
<dbReference type="GO" id="GO:0005524">
    <property type="term" value="F:ATP binding"/>
    <property type="evidence" value="ECO:0007669"/>
    <property type="project" value="UniProtKB-KW"/>
</dbReference>
<dbReference type="GO" id="GO:0004197">
    <property type="term" value="F:cysteine-type endopeptidase activity"/>
    <property type="evidence" value="ECO:0007669"/>
    <property type="project" value="InterPro"/>
</dbReference>
<dbReference type="GO" id="GO:0003723">
    <property type="term" value="F:RNA binding"/>
    <property type="evidence" value="ECO:0007669"/>
    <property type="project" value="UniProtKB-KW"/>
</dbReference>
<dbReference type="GO" id="GO:0003724">
    <property type="term" value="F:RNA helicase activity"/>
    <property type="evidence" value="ECO:0007669"/>
    <property type="project" value="InterPro"/>
</dbReference>
<dbReference type="GO" id="GO:0003968">
    <property type="term" value="F:RNA-directed RNA polymerase activity"/>
    <property type="evidence" value="ECO:0007669"/>
    <property type="project" value="UniProtKB-KW"/>
</dbReference>
<dbReference type="GO" id="GO:0006351">
    <property type="term" value="P:DNA-templated transcription"/>
    <property type="evidence" value="ECO:0007669"/>
    <property type="project" value="InterPro"/>
</dbReference>
<dbReference type="GO" id="GO:0006508">
    <property type="term" value="P:proteolysis"/>
    <property type="evidence" value="ECO:0007669"/>
    <property type="project" value="UniProtKB-KW"/>
</dbReference>
<dbReference type="GO" id="GO:0039694">
    <property type="term" value="P:viral RNA genome replication"/>
    <property type="evidence" value="ECO:0007669"/>
    <property type="project" value="InterPro"/>
</dbReference>
<dbReference type="Gene3D" id="3.30.70.270">
    <property type="match status" value="1"/>
</dbReference>
<dbReference type="InterPro" id="IPR043502">
    <property type="entry name" value="DNA/RNA_pol_sf"/>
</dbReference>
<dbReference type="InterPro" id="IPR000605">
    <property type="entry name" value="Helicase_SF3_ssDNA/RNA_vir"/>
</dbReference>
<dbReference type="InterPro" id="IPR014759">
    <property type="entry name" value="Helicase_SF3_ssRNA_vir"/>
</dbReference>
<dbReference type="InterPro" id="IPR044067">
    <property type="entry name" value="PCV_3C_PRO"/>
</dbReference>
<dbReference type="InterPro" id="IPR043128">
    <property type="entry name" value="Rev_trsase/Diguanyl_cyclase"/>
</dbReference>
<dbReference type="InterPro" id="IPR001205">
    <property type="entry name" value="RNA-dir_pol_C"/>
</dbReference>
<dbReference type="InterPro" id="IPR007094">
    <property type="entry name" value="RNA-dir_pol_PSvirus"/>
</dbReference>
<dbReference type="Pfam" id="PF00680">
    <property type="entry name" value="RdRP_1"/>
    <property type="match status" value="1"/>
</dbReference>
<dbReference type="Pfam" id="PF00910">
    <property type="entry name" value="RNA_helicase"/>
    <property type="match status" value="1"/>
</dbReference>
<dbReference type="SUPFAM" id="SSF56672">
    <property type="entry name" value="DNA/RNA polymerases"/>
    <property type="match status" value="1"/>
</dbReference>
<dbReference type="PROSITE" id="PS51874">
    <property type="entry name" value="PCV_3C_PRO"/>
    <property type="match status" value="1"/>
</dbReference>
<dbReference type="PROSITE" id="PS50507">
    <property type="entry name" value="RDRP_SSRNA_POS"/>
    <property type="match status" value="1"/>
</dbReference>
<dbReference type="PROSITE" id="PS51218">
    <property type="entry name" value="SF3_HELICASE_2"/>
    <property type="match status" value="1"/>
</dbReference>